<dbReference type="EC" id="4.3.2.10" evidence="1"/>
<dbReference type="EMBL" id="AP008231">
    <property type="protein sequence ID" value="BAD80196.1"/>
    <property type="molecule type" value="Genomic_DNA"/>
</dbReference>
<dbReference type="RefSeq" id="WP_011244316.1">
    <property type="nucleotide sequence ID" value="NC_006576.1"/>
</dbReference>
<dbReference type="SMR" id="Q5N0H4"/>
<dbReference type="KEGG" id="syc:syc2006_c"/>
<dbReference type="eggNOG" id="COG0107">
    <property type="taxonomic scope" value="Bacteria"/>
</dbReference>
<dbReference type="UniPathway" id="UPA00031">
    <property type="reaction ID" value="UER00010"/>
</dbReference>
<dbReference type="Proteomes" id="UP000001175">
    <property type="component" value="Chromosome"/>
</dbReference>
<dbReference type="GO" id="GO:0005737">
    <property type="term" value="C:cytoplasm"/>
    <property type="evidence" value="ECO:0007669"/>
    <property type="project" value="UniProtKB-SubCell"/>
</dbReference>
<dbReference type="GO" id="GO:0000107">
    <property type="term" value="F:imidazoleglycerol-phosphate synthase activity"/>
    <property type="evidence" value="ECO:0007669"/>
    <property type="project" value="UniProtKB-UniRule"/>
</dbReference>
<dbReference type="GO" id="GO:0016829">
    <property type="term" value="F:lyase activity"/>
    <property type="evidence" value="ECO:0007669"/>
    <property type="project" value="UniProtKB-KW"/>
</dbReference>
<dbReference type="GO" id="GO:0000105">
    <property type="term" value="P:L-histidine biosynthetic process"/>
    <property type="evidence" value="ECO:0007669"/>
    <property type="project" value="UniProtKB-UniRule"/>
</dbReference>
<dbReference type="CDD" id="cd04731">
    <property type="entry name" value="HisF"/>
    <property type="match status" value="1"/>
</dbReference>
<dbReference type="FunFam" id="3.20.20.70:FF:000006">
    <property type="entry name" value="Imidazole glycerol phosphate synthase subunit HisF"/>
    <property type="match status" value="1"/>
</dbReference>
<dbReference type="Gene3D" id="3.20.20.70">
    <property type="entry name" value="Aldolase class I"/>
    <property type="match status" value="1"/>
</dbReference>
<dbReference type="HAMAP" id="MF_01013">
    <property type="entry name" value="HisF"/>
    <property type="match status" value="1"/>
</dbReference>
<dbReference type="InterPro" id="IPR013785">
    <property type="entry name" value="Aldolase_TIM"/>
</dbReference>
<dbReference type="InterPro" id="IPR006062">
    <property type="entry name" value="His_biosynth"/>
</dbReference>
<dbReference type="InterPro" id="IPR004651">
    <property type="entry name" value="HisF"/>
</dbReference>
<dbReference type="InterPro" id="IPR050064">
    <property type="entry name" value="IGPS_HisA/HisF"/>
</dbReference>
<dbReference type="InterPro" id="IPR011060">
    <property type="entry name" value="RibuloseP-bd_barrel"/>
</dbReference>
<dbReference type="NCBIfam" id="TIGR00735">
    <property type="entry name" value="hisF"/>
    <property type="match status" value="1"/>
</dbReference>
<dbReference type="PANTHER" id="PTHR21235:SF2">
    <property type="entry name" value="IMIDAZOLE GLYCEROL PHOSPHATE SYNTHASE HISHF"/>
    <property type="match status" value="1"/>
</dbReference>
<dbReference type="PANTHER" id="PTHR21235">
    <property type="entry name" value="IMIDAZOLE GLYCEROL PHOSPHATE SYNTHASE SUBUNIT HISF/H IGP SYNTHASE SUBUNIT HISF/H"/>
    <property type="match status" value="1"/>
</dbReference>
<dbReference type="Pfam" id="PF00977">
    <property type="entry name" value="His_biosynth"/>
    <property type="match status" value="1"/>
</dbReference>
<dbReference type="SUPFAM" id="SSF51366">
    <property type="entry name" value="Ribulose-phoshate binding barrel"/>
    <property type="match status" value="1"/>
</dbReference>
<evidence type="ECO:0000255" key="1">
    <source>
        <dbReference type="HAMAP-Rule" id="MF_01013"/>
    </source>
</evidence>
<sequence>MLAKRILPCLDVKAGRVVKGVNFVDLRDAGDPVELAQAYDAAGADELVFLDIAATHEERQILVDVVYRTAEQVFIPLTVSGGINDLETIRQLPRAGADKVSINSAAARDPDLIRRASDRFGSQCIVVAIDARRRTDPDNPGWDVYVRGGRENTGIDALTWAETVARNGAGELLVTSMDADGTQAGYDLELTRAIADRVEIPVIASGGAGTCEDIAEAFRTGHAEAALLASLLHYGQLTIAEIKDHLRSAQIPTRP</sequence>
<proteinExistence type="inferred from homology"/>
<organism>
    <name type="scientific">Synechococcus sp. (strain ATCC 27144 / PCC 6301 / SAUG 1402/1)</name>
    <name type="common">Anacystis nidulans</name>
    <dbReference type="NCBI Taxonomy" id="269084"/>
    <lineage>
        <taxon>Bacteria</taxon>
        <taxon>Bacillati</taxon>
        <taxon>Cyanobacteriota</taxon>
        <taxon>Cyanophyceae</taxon>
        <taxon>Synechococcales</taxon>
        <taxon>Synechococcaceae</taxon>
        <taxon>Synechococcus</taxon>
    </lineage>
</organism>
<name>HIS6_SYNP6</name>
<keyword id="KW-0028">Amino-acid biosynthesis</keyword>
<keyword id="KW-0963">Cytoplasm</keyword>
<keyword id="KW-0368">Histidine biosynthesis</keyword>
<keyword id="KW-0456">Lyase</keyword>
<reference key="1">
    <citation type="journal article" date="2007" name="Photosyn. Res.">
        <title>Complete nucleotide sequence of the freshwater unicellular cyanobacterium Synechococcus elongatus PCC 6301 chromosome: gene content and organization.</title>
        <authorList>
            <person name="Sugita C."/>
            <person name="Ogata K."/>
            <person name="Shikata M."/>
            <person name="Jikuya H."/>
            <person name="Takano J."/>
            <person name="Furumichi M."/>
            <person name="Kanehisa M."/>
            <person name="Omata T."/>
            <person name="Sugiura M."/>
            <person name="Sugita M."/>
        </authorList>
    </citation>
    <scope>NUCLEOTIDE SEQUENCE [LARGE SCALE GENOMIC DNA]</scope>
    <source>
        <strain>ATCC 27144 / PCC 6301 / SAUG 1402/1</strain>
    </source>
</reference>
<gene>
    <name evidence="1" type="primary">hisF</name>
    <name type="ordered locus">syc2006_c</name>
</gene>
<feature type="chain" id="PRO_0000142246" description="Imidazole glycerol phosphate synthase subunit HisF">
    <location>
        <begin position="1"/>
        <end position="255"/>
    </location>
</feature>
<feature type="active site" evidence="1">
    <location>
        <position position="11"/>
    </location>
</feature>
<feature type="active site" evidence="1">
    <location>
        <position position="130"/>
    </location>
</feature>
<protein>
    <recommendedName>
        <fullName evidence="1">Imidazole glycerol phosphate synthase subunit HisF</fullName>
        <ecNumber evidence="1">4.3.2.10</ecNumber>
    </recommendedName>
    <alternativeName>
        <fullName evidence="1">IGP synthase cyclase subunit</fullName>
    </alternativeName>
    <alternativeName>
        <fullName evidence="1">IGP synthase subunit HisF</fullName>
    </alternativeName>
    <alternativeName>
        <fullName evidence="1">ImGP synthase subunit HisF</fullName>
        <shortName evidence="1">IGPS subunit HisF</shortName>
    </alternativeName>
</protein>
<accession>Q5N0H4</accession>
<comment type="function">
    <text evidence="1">IGPS catalyzes the conversion of PRFAR and glutamine to IGP, AICAR and glutamate. The HisF subunit catalyzes the cyclization activity that produces IGP and AICAR from PRFAR using the ammonia provided by the HisH subunit.</text>
</comment>
<comment type="catalytic activity">
    <reaction evidence="1">
        <text>5-[(5-phospho-1-deoxy-D-ribulos-1-ylimino)methylamino]-1-(5-phospho-beta-D-ribosyl)imidazole-4-carboxamide + L-glutamine = D-erythro-1-(imidazol-4-yl)glycerol 3-phosphate + 5-amino-1-(5-phospho-beta-D-ribosyl)imidazole-4-carboxamide + L-glutamate + H(+)</text>
        <dbReference type="Rhea" id="RHEA:24793"/>
        <dbReference type="ChEBI" id="CHEBI:15378"/>
        <dbReference type="ChEBI" id="CHEBI:29985"/>
        <dbReference type="ChEBI" id="CHEBI:58278"/>
        <dbReference type="ChEBI" id="CHEBI:58359"/>
        <dbReference type="ChEBI" id="CHEBI:58475"/>
        <dbReference type="ChEBI" id="CHEBI:58525"/>
        <dbReference type="EC" id="4.3.2.10"/>
    </reaction>
</comment>
<comment type="pathway">
    <text evidence="1">Amino-acid biosynthesis; L-histidine biosynthesis; L-histidine from 5-phospho-alpha-D-ribose 1-diphosphate: step 5/9.</text>
</comment>
<comment type="subunit">
    <text evidence="1">Heterodimer of HisH and HisF.</text>
</comment>
<comment type="subcellular location">
    <subcellularLocation>
        <location evidence="1">Cytoplasm</location>
    </subcellularLocation>
</comment>
<comment type="similarity">
    <text evidence="1">Belongs to the HisA/HisF family.</text>
</comment>